<proteinExistence type="evidence at transcript level"/>
<accession>Q85FM9</accession>
<accession>Q9MW06</accession>
<name>RPOC2_ADICA</name>
<evidence type="ECO:0000255" key="1">
    <source>
        <dbReference type="HAMAP-Rule" id="MF_01324"/>
    </source>
</evidence>
<evidence type="ECO:0000269" key="2">
    <source>
    </source>
</evidence>
<protein>
    <recommendedName>
        <fullName evidence="1">DNA-directed RNA polymerase subunit beta''</fullName>
        <ecNumber evidence="1">2.7.7.6</ecNumber>
    </recommendedName>
    <alternativeName>
        <fullName evidence="1">PEP</fullName>
    </alternativeName>
    <alternativeName>
        <fullName evidence="1">Plastid-encoded RNA polymerase subunit beta''</fullName>
        <shortName evidence="1">RNA polymerase subunit beta''</shortName>
    </alternativeName>
</protein>
<organism>
    <name type="scientific">Adiantum capillus-veneris</name>
    <name type="common">Maidenhair fern</name>
    <dbReference type="NCBI Taxonomy" id="13818"/>
    <lineage>
        <taxon>Eukaryota</taxon>
        <taxon>Viridiplantae</taxon>
        <taxon>Streptophyta</taxon>
        <taxon>Embryophyta</taxon>
        <taxon>Tracheophyta</taxon>
        <taxon>Polypodiopsida</taxon>
        <taxon>Polypodiidae</taxon>
        <taxon>Polypodiales</taxon>
        <taxon>Pteridineae</taxon>
        <taxon>Pteridaceae</taxon>
        <taxon>Vittarioideae</taxon>
        <taxon>Adiantum</taxon>
    </lineage>
</organism>
<sequence>MMDRNELPFCNKTIDRAAMKRLIGKLVVCFGIASTTNILDQVKVLGFQQATEASISLGIDDLSAVPTRGWLVRDAEKQGYVSEGHYRCGSLHAIEKLRQSIEAWYATSECLKREMSPSFKMIDPLNPVHMMSVSGARGTISQVHQLLGMRGLMADPRGQVIDLPIRRNLREGLSLTEYIISCYGARKGVVDTAVRTSDAGYLTRRLVEVVQHIAVRRRDCETPRSLAFLTSNTGERRRGFLGTMPHQGLVGRVLADHVYWDVRCIATRNQDISDGLASNLMASSQPIHVRSPLTCKSIFWICQFCYGWSLAHCNLVELGEAVGIIAGQSIGEPGTQLTLRTFHTGGVFTGDIAEYVRIPFNGLIKFDERLLHPTRTRHGHPAWMCRNDLPLFIGNSVGTQNSLIPAQSLLMIRTGQYVESQQVIAEVRAKEFPPKECIRKPIYPNSRGEIHWSKFVWHVRDSICNIARLVREASHIWILSGSPSKFDGNSFFHKDQDRVRIKPHPIKRIRSHSEGIFEAQASASNCVDRRKGIQEFGTDSKYFSNWSKRPRSNYILSNVWLERAELENSVSLLMERCQKNIKKLDFVSINVQLNNGSDQDHIFATYENFEYQTIVSGIIKYGTVEIKPVNPKRLQLDGGTGNKSSRPWCRVVRKGNFFLIPEEVYLTHEPSSSILVTNNAIVKKGAQITNNIITKSGGLIRMRKRSRDATTIRILPGYIYNPEKQINISKRGNTLLAPGNRISDDIEVKNWIYLQPFTFRRKGKTFVLMTPVSEYNLSSDSLAQVASRFDKPKTQRRAKAKTLSFICCKNGEKIEVINDVPTQLVRLCLIIEWQKYLHETLPRKRNYFSLISVKISYLFKTFLQVNPMVSPPTQRGVRVDEIFRTSTPLGKPSPPQLDLANSCCKSAVNCQGIIHLTLEPATSFLILSPFNLSRNNSVTDTRDGGCGGEIGKYFYGSEDGFFCIGENKKKISLSSKCISENYANPNVEEGWIKARRASSNLGQRKAEEVGLVGTLSPISCSSIPHHLSLGGKNLSTRKGFVDYSIDKSEHQDFYLIDESKLLLKCPINFYVKKGFLDKPSYLPTRVFSREIMLISLGLLISESRYLHRDRTCFQSGQVMAIHQDYSLVRTGKTFLATRGANPHKSSGDILEEGDTLITLPYDRLKSGDITQGLPKVEQLLESRSIASISAGIGDLFEKWCQNITKLIGNPWSHLLGAGRSMEHCQLILIDQIRKVYESQGVRICDKHLEIIVRQLTSRVVASEDGVTNVFLPGELVELSQAERINRVLKKSIFYEPIVLGMTRASLSTTSFLAEASFQETTRVLAKAALRGRIDWLKGLKENVVIGDSVPVGTGSPEIYCQLNINKEKESRLASGGSKKLTKWETGSSLSGYHKKRDFNPSFFIRKELNRSFTRLHLDMW</sequence>
<reference key="1">
    <citation type="journal article" date="2003" name="DNA Res.">
        <title>Complete nucleotide sequence of the chloroplast genome from a leptosporangiate fern, Adiantum capillus-veneris L.</title>
        <authorList>
            <person name="Wolf P.G."/>
            <person name="Rowe C.A."/>
            <person name="Sinclair R.B."/>
            <person name="Hasebe M."/>
        </authorList>
    </citation>
    <scope>NUCLEOTIDE SEQUENCE [LARGE SCALE GENOMIC DNA]</scope>
</reference>
<reference key="2">
    <citation type="journal article" date="2004" name="Gene">
        <title>High levels of RNA editing in a vascular plant chloroplast genome: analysis of transcripts from the fern Adiantum capillus-veneris.</title>
        <authorList>
            <person name="Wolf P.G."/>
            <person name="Rowe C.A."/>
            <person name="Hasebe M."/>
        </authorList>
    </citation>
    <scope>NUCLEOTIDE SEQUENCE [GENOMIC DNA]</scope>
    <scope>RNA EDITING</scope>
    <source>
        <tissue>Frond</tissue>
    </source>
</reference>
<reference key="3">
    <citation type="journal article" date="1999" name="Mol. Biol. Evol.">
        <title>Molecular phylogenetic analysis among bryophytes and tracheophytes based on combined data of plastid coded genes and the 18S rRNA gene.</title>
        <authorList>
            <person name="Nishiyama T."/>
            <person name="Kato M."/>
        </authorList>
    </citation>
    <scope>NUCLEOTIDE SEQUENCE [GENOMIC DNA] OF 1-317</scope>
</reference>
<dbReference type="EC" id="2.7.7.6" evidence="1"/>
<dbReference type="EMBL" id="AY178864">
    <property type="protein sequence ID" value="AAP29382.2"/>
    <property type="molecule type" value="Genomic_DNA"/>
</dbReference>
<dbReference type="EMBL" id="AB013683">
    <property type="protein sequence ID" value="BAA83459.1"/>
    <property type="molecule type" value="Genomic_DNA"/>
</dbReference>
<dbReference type="RefSeq" id="NP_848050.1">
    <property type="nucleotide sequence ID" value="NC_004766.1"/>
</dbReference>
<dbReference type="SMR" id="Q85FM9"/>
<dbReference type="GeneID" id="807355"/>
<dbReference type="GO" id="GO:0009507">
    <property type="term" value="C:chloroplast"/>
    <property type="evidence" value="ECO:0007669"/>
    <property type="project" value="UniProtKB-SubCell"/>
</dbReference>
<dbReference type="GO" id="GO:0000428">
    <property type="term" value="C:DNA-directed RNA polymerase complex"/>
    <property type="evidence" value="ECO:0007669"/>
    <property type="project" value="UniProtKB-KW"/>
</dbReference>
<dbReference type="GO" id="GO:0005739">
    <property type="term" value="C:mitochondrion"/>
    <property type="evidence" value="ECO:0007669"/>
    <property type="project" value="GOC"/>
</dbReference>
<dbReference type="GO" id="GO:0003677">
    <property type="term" value="F:DNA binding"/>
    <property type="evidence" value="ECO:0007669"/>
    <property type="project" value="UniProtKB-UniRule"/>
</dbReference>
<dbReference type="GO" id="GO:0003899">
    <property type="term" value="F:DNA-directed RNA polymerase activity"/>
    <property type="evidence" value="ECO:0007669"/>
    <property type="project" value="UniProtKB-UniRule"/>
</dbReference>
<dbReference type="GO" id="GO:0008270">
    <property type="term" value="F:zinc ion binding"/>
    <property type="evidence" value="ECO:0007669"/>
    <property type="project" value="UniProtKB-UniRule"/>
</dbReference>
<dbReference type="GO" id="GO:0006351">
    <property type="term" value="P:DNA-templated transcription"/>
    <property type="evidence" value="ECO:0007669"/>
    <property type="project" value="UniProtKB-UniRule"/>
</dbReference>
<dbReference type="CDD" id="cd02655">
    <property type="entry name" value="RNAP_beta'_C"/>
    <property type="match status" value="1"/>
</dbReference>
<dbReference type="Gene3D" id="1.10.132.30">
    <property type="match status" value="1"/>
</dbReference>
<dbReference type="Gene3D" id="1.10.150.390">
    <property type="match status" value="1"/>
</dbReference>
<dbReference type="Gene3D" id="1.10.1790.20">
    <property type="match status" value="1"/>
</dbReference>
<dbReference type="Gene3D" id="1.10.274.100">
    <property type="entry name" value="RNA polymerase Rpb1, domain 3"/>
    <property type="match status" value="1"/>
</dbReference>
<dbReference type="HAMAP" id="MF_01324">
    <property type="entry name" value="RNApol_bact_RpoC2"/>
    <property type="match status" value="1"/>
</dbReference>
<dbReference type="InterPro" id="IPR012756">
    <property type="entry name" value="DNA-dir_RpoC2_beta_pp"/>
</dbReference>
<dbReference type="InterPro" id="IPR050254">
    <property type="entry name" value="RNA_pol_beta''_euk"/>
</dbReference>
<dbReference type="InterPro" id="IPR042102">
    <property type="entry name" value="RNA_pol_Rpb1_3_sf"/>
</dbReference>
<dbReference type="InterPro" id="IPR007083">
    <property type="entry name" value="RNA_pol_Rpb1_4"/>
</dbReference>
<dbReference type="InterPro" id="IPR007081">
    <property type="entry name" value="RNA_pol_Rpb1_5"/>
</dbReference>
<dbReference type="InterPro" id="IPR038120">
    <property type="entry name" value="Rpb1_funnel_sf"/>
</dbReference>
<dbReference type="PANTHER" id="PTHR34995">
    <property type="entry name" value="DNA-DIRECTED RNA POLYMERASE SUBUNIT BETA"/>
    <property type="match status" value="1"/>
</dbReference>
<dbReference type="PANTHER" id="PTHR34995:SF1">
    <property type="entry name" value="DNA-DIRECTED RNA POLYMERASE SUBUNIT BETA"/>
    <property type="match status" value="1"/>
</dbReference>
<dbReference type="Pfam" id="PF05000">
    <property type="entry name" value="RNA_pol_Rpb1_4"/>
    <property type="match status" value="1"/>
</dbReference>
<dbReference type="Pfam" id="PF04998">
    <property type="entry name" value="RNA_pol_Rpb1_5"/>
    <property type="match status" value="1"/>
</dbReference>
<dbReference type="SUPFAM" id="SSF64484">
    <property type="entry name" value="beta and beta-prime subunits of DNA dependent RNA-polymerase"/>
    <property type="match status" value="1"/>
</dbReference>
<geneLocation type="chloroplast"/>
<gene>
    <name evidence="1" type="primary">rpoC2</name>
</gene>
<comment type="function">
    <text evidence="1">DNA-dependent RNA polymerase catalyzes the transcription of DNA into RNA using the four ribonucleoside triphosphates as substrates.</text>
</comment>
<comment type="catalytic activity">
    <reaction evidence="1">
        <text>RNA(n) + a ribonucleoside 5'-triphosphate = RNA(n+1) + diphosphate</text>
        <dbReference type="Rhea" id="RHEA:21248"/>
        <dbReference type="Rhea" id="RHEA-COMP:14527"/>
        <dbReference type="Rhea" id="RHEA-COMP:17342"/>
        <dbReference type="ChEBI" id="CHEBI:33019"/>
        <dbReference type="ChEBI" id="CHEBI:61557"/>
        <dbReference type="ChEBI" id="CHEBI:140395"/>
        <dbReference type="EC" id="2.7.7.6"/>
    </reaction>
</comment>
<comment type="cofactor">
    <cofactor evidence="1">
        <name>Zn(2+)</name>
        <dbReference type="ChEBI" id="CHEBI:29105"/>
    </cofactor>
    <text evidence="1">Binds 1 Zn(2+) ion per subunit.</text>
</comment>
<comment type="subunit">
    <text evidence="1">In plastids the minimal PEP RNA polymerase catalytic core is composed of four subunits: alpha, beta, beta', and beta''. When a (nuclear-encoded) sigma factor is associated with the core the holoenzyme is formed, which can initiate transcription.</text>
</comment>
<comment type="subcellular location">
    <subcellularLocation>
        <location evidence="1">Plastid</location>
        <location evidence="1">Chloroplast</location>
    </subcellularLocation>
</comment>
<comment type="RNA editing">
    <location>
        <position position="39" evidence="2"/>
    </location>
    <location>
        <position position="57" evidence="2"/>
    </location>
    <location>
        <position position="78" evidence="2"/>
    </location>
    <location>
        <position position="182" evidence="2"/>
    </location>
    <location>
        <position position="300" evidence="2"/>
    </location>
    <location>
        <position position="339" evidence="2"/>
    </location>
    <location>
        <position position="659" evidence="2"/>
    </location>
    <location>
        <position position="768" evidence="2"/>
    </location>
    <location>
        <position position="1099" evidence="2"/>
    </location>
    <location>
        <position position="1253" evidence="2"/>
    </location>
    <text>The nonsense codon at position 78 is modified to a sense codon.</text>
</comment>
<comment type="similarity">
    <text evidence="1">Belongs to the RNA polymerase beta' chain family. RpoC2 subfamily.</text>
</comment>
<feature type="chain" id="PRO_0000067911" description="DNA-directed RNA polymerase subunit beta''">
    <location>
        <begin position="1"/>
        <end position="1420"/>
    </location>
</feature>
<feature type="binding site" evidence="1">
    <location>
        <position position="220"/>
    </location>
    <ligand>
        <name>Zn(2+)</name>
        <dbReference type="ChEBI" id="CHEBI:29105"/>
    </ligand>
</feature>
<feature type="binding site" evidence="1">
    <location>
        <position position="295"/>
    </location>
    <ligand>
        <name>Zn(2+)</name>
        <dbReference type="ChEBI" id="CHEBI:29105"/>
    </ligand>
</feature>
<feature type="binding site" evidence="1">
    <location>
        <position position="302"/>
    </location>
    <ligand>
        <name>Zn(2+)</name>
        <dbReference type="ChEBI" id="CHEBI:29105"/>
    </ligand>
</feature>
<feature type="binding site" evidence="1">
    <location>
        <position position="305"/>
    </location>
    <ligand>
        <name>Zn(2+)</name>
        <dbReference type="ChEBI" id="CHEBI:29105"/>
    </ligand>
</feature>
<keyword id="KW-0150">Chloroplast</keyword>
<keyword id="KW-0240">DNA-directed RNA polymerase</keyword>
<keyword id="KW-0479">Metal-binding</keyword>
<keyword id="KW-0548">Nucleotidyltransferase</keyword>
<keyword id="KW-0934">Plastid</keyword>
<keyword id="KW-0691">RNA editing</keyword>
<keyword id="KW-0804">Transcription</keyword>
<keyword id="KW-0808">Transferase</keyword>
<keyword id="KW-0862">Zinc</keyword>